<proteinExistence type="inferred from homology"/>
<comment type="function">
    <text evidence="1">Allows the formation of correctly charged Gln-tRNA(Gln) through the transamidation of misacylated Glu-tRNA(Gln) in organisms which lack glutaminyl-tRNA synthetase. The reaction takes place in the presence of glutamine and ATP through an activated gamma-phospho-Glu-tRNA(Gln).</text>
</comment>
<comment type="catalytic activity">
    <reaction evidence="1">
        <text>L-glutamyl-tRNA(Gln) + L-glutamine + ATP + H2O = L-glutaminyl-tRNA(Gln) + L-glutamate + ADP + phosphate + H(+)</text>
        <dbReference type="Rhea" id="RHEA:17521"/>
        <dbReference type="Rhea" id="RHEA-COMP:9681"/>
        <dbReference type="Rhea" id="RHEA-COMP:9684"/>
        <dbReference type="ChEBI" id="CHEBI:15377"/>
        <dbReference type="ChEBI" id="CHEBI:15378"/>
        <dbReference type="ChEBI" id="CHEBI:29985"/>
        <dbReference type="ChEBI" id="CHEBI:30616"/>
        <dbReference type="ChEBI" id="CHEBI:43474"/>
        <dbReference type="ChEBI" id="CHEBI:58359"/>
        <dbReference type="ChEBI" id="CHEBI:78520"/>
        <dbReference type="ChEBI" id="CHEBI:78521"/>
        <dbReference type="ChEBI" id="CHEBI:456216"/>
        <dbReference type="EC" id="6.3.5.7"/>
    </reaction>
</comment>
<comment type="subunit">
    <text evidence="1">Heterotrimer of A, B and C subunits.</text>
</comment>
<comment type="similarity">
    <text evidence="1">Belongs to the amidase family. GatA subfamily.</text>
</comment>
<keyword id="KW-0067">ATP-binding</keyword>
<keyword id="KW-0436">Ligase</keyword>
<keyword id="KW-0547">Nucleotide-binding</keyword>
<keyword id="KW-0648">Protein biosynthesis</keyword>
<protein>
    <recommendedName>
        <fullName evidence="1">Glutamyl-tRNA(Gln) amidotransferase subunit A</fullName>
        <shortName evidence="1">Glu-ADT subunit A</shortName>
        <ecNumber evidence="1">6.3.5.7</ecNumber>
    </recommendedName>
</protein>
<name>GATA_LISW6</name>
<gene>
    <name evidence="1" type="primary">gatA</name>
    <name type="ordered locus">lwe1772</name>
</gene>
<accession>A0AJK8</accession>
<reference key="1">
    <citation type="journal article" date="2006" name="J. Bacteriol.">
        <title>Whole-genome sequence of Listeria welshimeri reveals common steps in genome reduction with Listeria innocua as compared to Listeria monocytogenes.</title>
        <authorList>
            <person name="Hain T."/>
            <person name="Steinweg C."/>
            <person name="Kuenne C.T."/>
            <person name="Billion A."/>
            <person name="Ghai R."/>
            <person name="Chatterjee S.S."/>
            <person name="Domann E."/>
            <person name="Kaerst U."/>
            <person name="Goesmann A."/>
            <person name="Bekel T."/>
            <person name="Bartels D."/>
            <person name="Kaiser O."/>
            <person name="Meyer F."/>
            <person name="Puehler A."/>
            <person name="Weisshaar B."/>
            <person name="Wehland J."/>
            <person name="Liang C."/>
            <person name="Dandekar T."/>
            <person name="Lampidis R."/>
            <person name="Kreft J."/>
            <person name="Goebel W."/>
            <person name="Chakraborty T."/>
        </authorList>
    </citation>
    <scope>NUCLEOTIDE SEQUENCE [LARGE SCALE GENOMIC DNA]</scope>
    <source>
        <strain>ATCC 35897 / DSM 20650 / CCUG 15529 / CIP 8149 / NCTC 11857 / SLCC 5334 / V8</strain>
    </source>
</reference>
<evidence type="ECO:0000255" key="1">
    <source>
        <dbReference type="HAMAP-Rule" id="MF_00120"/>
    </source>
</evidence>
<feature type="chain" id="PRO_1000015855" description="Glutamyl-tRNA(Gln) amidotransferase subunit A">
    <location>
        <begin position="1"/>
        <end position="483"/>
    </location>
</feature>
<feature type="active site" description="Charge relay system" evidence="1">
    <location>
        <position position="77"/>
    </location>
</feature>
<feature type="active site" description="Charge relay system" evidence="1">
    <location>
        <position position="152"/>
    </location>
</feature>
<feature type="active site" description="Acyl-ester intermediate" evidence="1">
    <location>
        <position position="176"/>
    </location>
</feature>
<organism>
    <name type="scientific">Listeria welshimeri serovar 6b (strain ATCC 35897 / DSM 20650 / CCUG 15529 / CIP 8149 / NCTC 11857 / SLCC 5334 / V8)</name>
    <dbReference type="NCBI Taxonomy" id="386043"/>
    <lineage>
        <taxon>Bacteria</taxon>
        <taxon>Bacillati</taxon>
        <taxon>Bacillota</taxon>
        <taxon>Bacilli</taxon>
        <taxon>Bacillales</taxon>
        <taxon>Listeriaceae</taxon>
        <taxon>Listeria</taxon>
    </lineage>
</organism>
<sequence>MGLFDFSVKELHDKLVKKEITPFDLVTESFNRIESVEDKVGSFITLNKEAAFDVAEELGDAGIDPNNMLAGLPIGIKDNIVTKNLRTTAASKILENFDPIYDATVVSKLKNAQTINIGKLNMDEFAMGSSTETSYFHKTHNPWDLSRVPGGSSGGSASAVAAGEVLFSLGSDTGGSIRQPAAFCGVVGMKPTYGRVSRFGLIAFASSLDQIGPITKNVEDNAYLLEAISGLDANDSTSINQPVERFSDNLTGDIKGLRIGVPKEYLGEGVDPGVKQAVLDALKTLEKLGATWDEVSLPHSEYGVASYYILASSEASSNLSRFDGVRYGYRSPNAHTLEELYKKTRSEGFGDEVKRRIMLGTYALSSGYYDAYYKKAQQARTLIKQDFVNVFEKYDVIIGPSSPTTAFKIDGMINDPITMYSNDILTVPINLAGVPAISVPCGFSEGLPVGLQIIGNYFEESLLYKVAHAFEQETTFHKEKPNL</sequence>
<dbReference type="EC" id="6.3.5.7" evidence="1"/>
<dbReference type="EMBL" id="AM263198">
    <property type="protein sequence ID" value="CAK21190.1"/>
    <property type="molecule type" value="Genomic_DNA"/>
</dbReference>
<dbReference type="RefSeq" id="WP_011702550.1">
    <property type="nucleotide sequence ID" value="NC_008555.1"/>
</dbReference>
<dbReference type="SMR" id="A0AJK8"/>
<dbReference type="STRING" id="386043.lwe1772"/>
<dbReference type="GeneID" id="61189671"/>
<dbReference type="KEGG" id="lwe:lwe1772"/>
<dbReference type="eggNOG" id="COG0154">
    <property type="taxonomic scope" value="Bacteria"/>
</dbReference>
<dbReference type="HOGENOM" id="CLU_009600_0_3_9"/>
<dbReference type="OrthoDB" id="9811471at2"/>
<dbReference type="Proteomes" id="UP000000779">
    <property type="component" value="Chromosome"/>
</dbReference>
<dbReference type="GO" id="GO:0030956">
    <property type="term" value="C:glutamyl-tRNA(Gln) amidotransferase complex"/>
    <property type="evidence" value="ECO:0007669"/>
    <property type="project" value="InterPro"/>
</dbReference>
<dbReference type="GO" id="GO:0005524">
    <property type="term" value="F:ATP binding"/>
    <property type="evidence" value="ECO:0007669"/>
    <property type="project" value="UniProtKB-KW"/>
</dbReference>
<dbReference type="GO" id="GO:0050567">
    <property type="term" value="F:glutaminyl-tRNA synthase (glutamine-hydrolyzing) activity"/>
    <property type="evidence" value="ECO:0007669"/>
    <property type="project" value="UniProtKB-UniRule"/>
</dbReference>
<dbReference type="GO" id="GO:0006412">
    <property type="term" value="P:translation"/>
    <property type="evidence" value="ECO:0007669"/>
    <property type="project" value="UniProtKB-UniRule"/>
</dbReference>
<dbReference type="Gene3D" id="3.90.1300.10">
    <property type="entry name" value="Amidase signature (AS) domain"/>
    <property type="match status" value="1"/>
</dbReference>
<dbReference type="HAMAP" id="MF_00120">
    <property type="entry name" value="GatA"/>
    <property type="match status" value="1"/>
</dbReference>
<dbReference type="InterPro" id="IPR000120">
    <property type="entry name" value="Amidase"/>
</dbReference>
<dbReference type="InterPro" id="IPR020556">
    <property type="entry name" value="Amidase_CS"/>
</dbReference>
<dbReference type="InterPro" id="IPR023631">
    <property type="entry name" value="Amidase_dom"/>
</dbReference>
<dbReference type="InterPro" id="IPR036928">
    <property type="entry name" value="AS_sf"/>
</dbReference>
<dbReference type="InterPro" id="IPR004412">
    <property type="entry name" value="GatA"/>
</dbReference>
<dbReference type="NCBIfam" id="TIGR00132">
    <property type="entry name" value="gatA"/>
    <property type="match status" value="1"/>
</dbReference>
<dbReference type="PANTHER" id="PTHR11895:SF151">
    <property type="entry name" value="GLUTAMYL-TRNA(GLN) AMIDOTRANSFERASE SUBUNIT A"/>
    <property type="match status" value="1"/>
</dbReference>
<dbReference type="PANTHER" id="PTHR11895">
    <property type="entry name" value="TRANSAMIDASE"/>
    <property type="match status" value="1"/>
</dbReference>
<dbReference type="Pfam" id="PF01425">
    <property type="entry name" value="Amidase"/>
    <property type="match status" value="1"/>
</dbReference>
<dbReference type="SUPFAM" id="SSF75304">
    <property type="entry name" value="Amidase signature (AS) enzymes"/>
    <property type="match status" value="1"/>
</dbReference>
<dbReference type="PROSITE" id="PS00571">
    <property type="entry name" value="AMIDASES"/>
    <property type="match status" value="1"/>
</dbReference>